<reference key="1">
    <citation type="journal article" date="1984" name="Mol. Biol. Evol.">
        <title>Amino acid sequences of lower vertebrate parvalbumins and their evolution: parvalbumins of boa, turtle, and salamander.</title>
        <authorList>
            <person name="Maeda N."/>
            <person name="Zhu D."/>
            <person name="Fitch W.M."/>
        </authorList>
    </citation>
    <scope>PROTEIN SEQUENCE</scope>
</reference>
<accession>P02615</accession>
<sequence>AFAGILSDADIAAGLQSCQAADSFSCKTFFAKSGLHSKSKDQLTKVFGVIDRDKSGYIEEDELKKFLQNFDGKARDLTDKETAEFLKEGDTDGDGKIGVEEFVVLVTKG</sequence>
<evidence type="ECO:0000250" key="1"/>
<evidence type="ECO:0000250" key="2">
    <source>
        <dbReference type="UniProtKB" id="P02621"/>
    </source>
</evidence>
<evidence type="ECO:0000255" key="3">
    <source>
        <dbReference type="PROSITE-ProRule" id="PRU00448"/>
    </source>
</evidence>
<evidence type="ECO:0000305" key="4"/>
<comment type="function">
    <text evidence="1">In muscle, parvalbumin is thought to be involved in relaxation after contraction. It binds two calcium ions (By similarity).</text>
</comment>
<comment type="similarity">
    <text evidence="4">Belongs to the parvalbumin family.</text>
</comment>
<feature type="chain" id="PRO_0000073604" description="Parvalbumin beta">
    <location>
        <begin position="1"/>
        <end position="109"/>
    </location>
</feature>
<feature type="domain" description="EF-hand 1" evidence="3">
    <location>
        <begin position="38"/>
        <end position="73"/>
    </location>
</feature>
<feature type="domain" description="EF-hand 2" evidence="3">
    <location>
        <begin position="77"/>
        <end position="109"/>
    </location>
</feature>
<feature type="binding site" evidence="3">
    <location>
        <position position="51"/>
    </location>
    <ligand>
        <name>Ca(2+)</name>
        <dbReference type="ChEBI" id="CHEBI:29108"/>
        <label>1</label>
    </ligand>
</feature>
<feature type="binding site" evidence="3">
    <location>
        <position position="53"/>
    </location>
    <ligand>
        <name>Ca(2+)</name>
        <dbReference type="ChEBI" id="CHEBI:29108"/>
        <label>1</label>
    </ligand>
</feature>
<feature type="binding site" evidence="3">
    <location>
        <position position="55"/>
    </location>
    <ligand>
        <name>Ca(2+)</name>
        <dbReference type="ChEBI" id="CHEBI:29108"/>
        <label>1</label>
    </ligand>
</feature>
<feature type="binding site" evidence="3">
    <location>
        <position position="57"/>
    </location>
    <ligand>
        <name>Ca(2+)</name>
        <dbReference type="ChEBI" id="CHEBI:29108"/>
        <label>1</label>
    </ligand>
</feature>
<feature type="binding site" evidence="2">
    <location>
        <position position="59"/>
    </location>
    <ligand>
        <name>Ca(2+)</name>
        <dbReference type="ChEBI" id="CHEBI:29108"/>
        <label>1</label>
    </ligand>
</feature>
<feature type="binding site" evidence="2 3">
    <location>
        <position position="62"/>
    </location>
    <ligand>
        <name>Ca(2+)</name>
        <dbReference type="ChEBI" id="CHEBI:29108"/>
        <label>1</label>
    </ligand>
</feature>
<feature type="binding site" evidence="3">
    <location>
        <position position="90"/>
    </location>
    <ligand>
        <name>Ca(2+)</name>
        <dbReference type="ChEBI" id="CHEBI:29108"/>
        <label>2</label>
    </ligand>
</feature>
<feature type="binding site" evidence="3">
    <location>
        <position position="92"/>
    </location>
    <ligand>
        <name>Ca(2+)</name>
        <dbReference type="ChEBI" id="CHEBI:29108"/>
        <label>2</label>
    </ligand>
</feature>
<feature type="binding site" evidence="3">
    <location>
        <position position="94"/>
    </location>
    <ligand>
        <name>Ca(2+)</name>
        <dbReference type="ChEBI" id="CHEBI:29108"/>
        <label>2</label>
    </ligand>
</feature>
<feature type="binding site" evidence="3">
    <location>
        <position position="96"/>
    </location>
    <ligand>
        <name>Ca(2+)</name>
        <dbReference type="ChEBI" id="CHEBI:29108"/>
        <label>2</label>
    </ligand>
</feature>
<feature type="binding site" evidence="3">
    <location>
        <position position="101"/>
    </location>
    <ligand>
        <name>Ca(2+)</name>
        <dbReference type="ChEBI" id="CHEBI:29108"/>
        <label>2</label>
    </ligand>
</feature>
<name>PRVB_BOACO</name>
<proteinExistence type="evidence at protein level"/>
<dbReference type="PIR" id="A03050">
    <property type="entry name" value="PVSNBB"/>
</dbReference>
<dbReference type="SMR" id="P02615"/>
<dbReference type="GO" id="GO:0005737">
    <property type="term" value="C:cytoplasm"/>
    <property type="evidence" value="ECO:0007669"/>
    <property type="project" value="TreeGrafter"/>
</dbReference>
<dbReference type="GO" id="GO:0005509">
    <property type="term" value="F:calcium ion binding"/>
    <property type="evidence" value="ECO:0007669"/>
    <property type="project" value="InterPro"/>
</dbReference>
<dbReference type="CDD" id="cd16255">
    <property type="entry name" value="EFh_parvalbumin_beta"/>
    <property type="match status" value="1"/>
</dbReference>
<dbReference type="FunFam" id="1.10.238.10:FF:000060">
    <property type="entry name" value="Parvalbumin, thymic"/>
    <property type="match status" value="1"/>
</dbReference>
<dbReference type="Gene3D" id="1.10.238.10">
    <property type="entry name" value="EF-hand"/>
    <property type="match status" value="1"/>
</dbReference>
<dbReference type="InterPro" id="IPR011992">
    <property type="entry name" value="EF-hand-dom_pair"/>
</dbReference>
<dbReference type="InterPro" id="IPR018247">
    <property type="entry name" value="EF_Hand_1_Ca_BS"/>
</dbReference>
<dbReference type="InterPro" id="IPR002048">
    <property type="entry name" value="EF_hand_dom"/>
</dbReference>
<dbReference type="InterPro" id="IPR008080">
    <property type="entry name" value="Parvalbumin"/>
</dbReference>
<dbReference type="PANTHER" id="PTHR11653:SF12">
    <property type="entry name" value="PARVALBUMIN"/>
    <property type="match status" value="1"/>
</dbReference>
<dbReference type="PANTHER" id="PTHR11653">
    <property type="entry name" value="PARVALBUMIN ALPHA"/>
    <property type="match status" value="1"/>
</dbReference>
<dbReference type="Pfam" id="PF13499">
    <property type="entry name" value="EF-hand_7"/>
    <property type="match status" value="1"/>
</dbReference>
<dbReference type="PRINTS" id="PR01697">
    <property type="entry name" value="PARVALBUMIN"/>
</dbReference>
<dbReference type="SMART" id="SM00054">
    <property type="entry name" value="EFh"/>
    <property type="match status" value="2"/>
</dbReference>
<dbReference type="SUPFAM" id="SSF47473">
    <property type="entry name" value="EF-hand"/>
    <property type="match status" value="1"/>
</dbReference>
<dbReference type="PROSITE" id="PS00018">
    <property type="entry name" value="EF_HAND_1"/>
    <property type="match status" value="2"/>
</dbReference>
<dbReference type="PROSITE" id="PS50222">
    <property type="entry name" value="EF_HAND_2"/>
    <property type="match status" value="2"/>
</dbReference>
<protein>
    <recommendedName>
        <fullName>Parvalbumin beta</fullName>
    </recommendedName>
</protein>
<organism>
    <name type="scientific">Boa constrictor</name>
    <name type="common">Boa</name>
    <dbReference type="NCBI Taxonomy" id="8574"/>
    <lineage>
        <taxon>Eukaryota</taxon>
        <taxon>Metazoa</taxon>
        <taxon>Chordata</taxon>
        <taxon>Craniata</taxon>
        <taxon>Vertebrata</taxon>
        <taxon>Euteleostomi</taxon>
        <taxon>Lepidosauria</taxon>
        <taxon>Squamata</taxon>
        <taxon>Bifurcata</taxon>
        <taxon>Unidentata</taxon>
        <taxon>Episquamata</taxon>
        <taxon>Toxicofera</taxon>
        <taxon>Serpentes</taxon>
        <taxon>Henophidia</taxon>
        <taxon>Boidae</taxon>
        <taxon>Boinae</taxon>
        <taxon>Boa</taxon>
    </lineage>
</organism>
<keyword id="KW-0106">Calcium</keyword>
<keyword id="KW-0903">Direct protein sequencing</keyword>
<keyword id="KW-0479">Metal-binding</keyword>
<keyword id="KW-0514">Muscle protein</keyword>
<keyword id="KW-0677">Repeat</keyword>